<name>ATPE_SYNSC</name>
<comment type="function">
    <text evidence="1">Produces ATP from ADP in the presence of a proton gradient across the membrane.</text>
</comment>
<comment type="subunit">
    <text>F-type ATPases have 2 components, CF(1) - the catalytic core - and CF(0) - the membrane proton channel. CF(1) has five subunits: alpha(3), beta(3), gamma(1), delta(1), epsilon(1). CF(0) has three main subunits: a, b and c.</text>
</comment>
<comment type="subcellular location">
    <subcellularLocation>
        <location evidence="1">Cellular thylakoid membrane</location>
        <topology evidence="1">Peripheral membrane protein</topology>
    </subcellularLocation>
</comment>
<comment type="similarity">
    <text evidence="1">Belongs to the ATPase epsilon chain family.</text>
</comment>
<feature type="chain" id="PRO_0000265910" description="ATP synthase epsilon chain">
    <location>
        <begin position="1"/>
        <end position="136"/>
    </location>
</feature>
<feature type="region of interest" description="Disordered" evidence="2">
    <location>
        <begin position="106"/>
        <end position="136"/>
    </location>
</feature>
<dbReference type="EMBL" id="CP000110">
    <property type="protein sequence ID" value="ABB35911.1"/>
    <property type="molecule type" value="Genomic_DNA"/>
</dbReference>
<dbReference type="RefSeq" id="WP_011365115.1">
    <property type="nucleotide sequence ID" value="NC_007516.1"/>
</dbReference>
<dbReference type="SMR" id="Q3AHM1"/>
<dbReference type="STRING" id="110662.Syncc9605_2172"/>
<dbReference type="KEGG" id="syd:Syncc9605_2172"/>
<dbReference type="eggNOG" id="COG0355">
    <property type="taxonomic scope" value="Bacteria"/>
</dbReference>
<dbReference type="HOGENOM" id="CLU_084338_1_2_3"/>
<dbReference type="OrthoDB" id="9804110at2"/>
<dbReference type="GO" id="GO:0031676">
    <property type="term" value="C:plasma membrane-derived thylakoid membrane"/>
    <property type="evidence" value="ECO:0007669"/>
    <property type="project" value="UniProtKB-SubCell"/>
</dbReference>
<dbReference type="GO" id="GO:0045259">
    <property type="term" value="C:proton-transporting ATP synthase complex"/>
    <property type="evidence" value="ECO:0007669"/>
    <property type="project" value="UniProtKB-KW"/>
</dbReference>
<dbReference type="GO" id="GO:0005524">
    <property type="term" value="F:ATP binding"/>
    <property type="evidence" value="ECO:0007669"/>
    <property type="project" value="UniProtKB-UniRule"/>
</dbReference>
<dbReference type="GO" id="GO:0046933">
    <property type="term" value="F:proton-transporting ATP synthase activity, rotational mechanism"/>
    <property type="evidence" value="ECO:0007669"/>
    <property type="project" value="UniProtKB-UniRule"/>
</dbReference>
<dbReference type="CDD" id="cd12152">
    <property type="entry name" value="F1-ATPase_delta"/>
    <property type="match status" value="1"/>
</dbReference>
<dbReference type="Gene3D" id="2.60.15.10">
    <property type="entry name" value="F0F1 ATP synthase delta/epsilon subunit, N-terminal"/>
    <property type="match status" value="1"/>
</dbReference>
<dbReference type="Gene3D" id="1.10.287.540">
    <property type="entry name" value="Helix hairpin bin"/>
    <property type="match status" value="1"/>
</dbReference>
<dbReference type="HAMAP" id="MF_00530">
    <property type="entry name" value="ATP_synth_epsil_bac"/>
    <property type="match status" value="1"/>
</dbReference>
<dbReference type="InterPro" id="IPR001469">
    <property type="entry name" value="ATP_synth_F1_dsu/esu"/>
</dbReference>
<dbReference type="InterPro" id="IPR020546">
    <property type="entry name" value="ATP_synth_F1_dsu/esu_N"/>
</dbReference>
<dbReference type="InterPro" id="IPR020547">
    <property type="entry name" value="ATP_synth_F1_esu_C"/>
</dbReference>
<dbReference type="InterPro" id="IPR036771">
    <property type="entry name" value="ATPsynth_dsu/esu_N"/>
</dbReference>
<dbReference type="NCBIfam" id="TIGR01216">
    <property type="entry name" value="ATP_synt_epsi"/>
    <property type="match status" value="1"/>
</dbReference>
<dbReference type="PANTHER" id="PTHR13822">
    <property type="entry name" value="ATP SYNTHASE DELTA/EPSILON CHAIN"/>
    <property type="match status" value="1"/>
</dbReference>
<dbReference type="PANTHER" id="PTHR13822:SF10">
    <property type="entry name" value="ATP SYNTHASE EPSILON CHAIN, CHLOROPLASTIC"/>
    <property type="match status" value="1"/>
</dbReference>
<dbReference type="Pfam" id="PF00401">
    <property type="entry name" value="ATP-synt_DE"/>
    <property type="match status" value="1"/>
</dbReference>
<dbReference type="Pfam" id="PF02823">
    <property type="entry name" value="ATP-synt_DE_N"/>
    <property type="match status" value="1"/>
</dbReference>
<dbReference type="SUPFAM" id="SSF51344">
    <property type="entry name" value="Epsilon subunit of F1F0-ATP synthase N-terminal domain"/>
    <property type="match status" value="1"/>
</dbReference>
<accession>Q3AHM1</accession>
<organism>
    <name type="scientific">Synechococcus sp. (strain CC9605)</name>
    <dbReference type="NCBI Taxonomy" id="110662"/>
    <lineage>
        <taxon>Bacteria</taxon>
        <taxon>Bacillati</taxon>
        <taxon>Cyanobacteriota</taxon>
        <taxon>Cyanophyceae</taxon>
        <taxon>Synechococcales</taxon>
        <taxon>Synechococcaceae</taxon>
        <taxon>Synechococcus</taxon>
    </lineage>
</organism>
<sequence length="136" mass="14162">MSLTLRVLATDQNVFDGSADEVILPSTTGQLGILPGHISLLTAIDIGVLRVRANGAWNSIALMGGFAEVDADEVTVLVNKAELGSSIDAAAAETAFQKATIMVAGMEGQPSSPEKLKAQQQLNEARARLQASKTAD</sequence>
<proteinExistence type="inferred from homology"/>
<evidence type="ECO:0000255" key="1">
    <source>
        <dbReference type="HAMAP-Rule" id="MF_00530"/>
    </source>
</evidence>
<evidence type="ECO:0000256" key="2">
    <source>
        <dbReference type="SAM" id="MobiDB-lite"/>
    </source>
</evidence>
<protein>
    <recommendedName>
        <fullName evidence="1">ATP synthase epsilon chain</fullName>
    </recommendedName>
    <alternativeName>
        <fullName evidence="1">ATP synthase F1 sector epsilon subunit</fullName>
    </alternativeName>
    <alternativeName>
        <fullName evidence="1">F-ATPase epsilon subunit</fullName>
    </alternativeName>
</protein>
<reference key="1">
    <citation type="submission" date="2005-07" db="EMBL/GenBank/DDBJ databases">
        <title>Complete sequence of Synechococcus sp. CC9605.</title>
        <authorList>
            <consortium name="US DOE Joint Genome Institute"/>
            <person name="Copeland A."/>
            <person name="Lucas S."/>
            <person name="Lapidus A."/>
            <person name="Barry K."/>
            <person name="Detter J.C."/>
            <person name="Glavina T."/>
            <person name="Hammon N."/>
            <person name="Israni S."/>
            <person name="Pitluck S."/>
            <person name="Schmutz J."/>
            <person name="Martinez M."/>
            <person name="Larimer F."/>
            <person name="Land M."/>
            <person name="Kyrpides N."/>
            <person name="Ivanova N."/>
            <person name="Richardson P."/>
        </authorList>
    </citation>
    <scope>NUCLEOTIDE SEQUENCE [LARGE SCALE GENOMIC DNA]</scope>
    <source>
        <strain>CC9605</strain>
    </source>
</reference>
<gene>
    <name evidence="1" type="primary">atpC</name>
    <name type="ordered locus">Syncc9605_2172</name>
</gene>
<keyword id="KW-0066">ATP synthesis</keyword>
<keyword id="KW-0139">CF(1)</keyword>
<keyword id="KW-0375">Hydrogen ion transport</keyword>
<keyword id="KW-0406">Ion transport</keyword>
<keyword id="KW-0472">Membrane</keyword>
<keyword id="KW-0793">Thylakoid</keyword>
<keyword id="KW-0813">Transport</keyword>